<protein>
    <recommendedName>
        <fullName evidence="1">UPF0250 protein YbeD</fullName>
    </recommendedName>
</protein>
<organism>
    <name type="scientific">Escherichia fergusonii (strain ATCC 35469 / DSM 13698 / CCUG 18766 / IAM 14443 / JCM 21226 / LMG 7866 / NBRC 102419 / NCTC 12128 / CDC 0568-73)</name>
    <dbReference type="NCBI Taxonomy" id="585054"/>
    <lineage>
        <taxon>Bacteria</taxon>
        <taxon>Pseudomonadati</taxon>
        <taxon>Pseudomonadota</taxon>
        <taxon>Gammaproteobacteria</taxon>
        <taxon>Enterobacterales</taxon>
        <taxon>Enterobacteriaceae</taxon>
        <taxon>Escherichia</taxon>
    </lineage>
</organism>
<reference key="1">
    <citation type="journal article" date="2009" name="PLoS Genet.">
        <title>Organised genome dynamics in the Escherichia coli species results in highly diverse adaptive paths.</title>
        <authorList>
            <person name="Touchon M."/>
            <person name="Hoede C."/>
            <person name="Tenaillon O."/>
            <person name="Barbe V."/>
            <person name="Baeriswyl S."/>
            <person name="Bidet P."/>
            <person name="Bingen E."/>
            <person name="Bonacorsi S."/>
            <person name="Bouchier C."/>
            <person name="Bouvet O."/>
            <person name="Calteau A."/>
            <person name="Chiapello H."/>
            <person name="Clermont O."/>
            <person name="Cruveiller S."/>
            <person name="Danchin A."/>
            <person name="Diard M."/>
            <person name="Dossat C."/>
            <person name="Karoui M.E."/>
            <person name="Frapy E."/>
            <person name="Garry L."/>
            <person name="Ghigo J.M."/>
            <person name="Gilles A.M."/>
            <person name="Johnson J."/>
            <person name="Le Bouguenec C."/>
            <person name="Lescat M."/>
            <person name="Mangenot S."/>
            <person name="Martinez-Jehanne V."/>
            <person name="Matic I."/>
            <person name="Nassif X."/>
            <person name="Oztas S."/>
            <person name="Petit M.A."/>
            <person name="Pichon C."/>
            <person name="Rouy Z."/>
            <person name="Ruf C.S."/>
            <person name="Schneider D."/>
            <person name="Tourret J."/>
            <person name="Vacherie B."/>
            <person name="Vallenet D."/>
            <person name="Medigue C."/>
            <person name="Rocha E.P.C."/>
            <person name="Denamur E."/>
        </authorList>
    </citation>
    <scope>NUCLEOTIDE SEQUENCE [LARGE SCALE GENOMIC DNA]</scope>
    <source>
        <strain>ATCC 35469 / DSM 13698 / BCRC 15582 / CCUG 18766 / IAM 14443 / JCM 21226 / LMG 7866 / NBRC 102419 / NCTC 12128 / CDC 0568-73</strain>
    </source>
</reference>
<dbReference type="EMBL" id="CU928158">
    <property type="protein sequence ID" value="CAQ89971.1"/>
    <property type="molecule type" value="Genomic_DNA"/>
</dbReference>
<dbReference type="RefSeq" id="WP_000850550.1">
    <property type="nucleotide sequence ID" value="NC_011740.1"/>
</dbReference>
<dbReference type="SMR" id="B7LLI1"/>
<dbReference type="GeneID" id="93776851"/>
<dbReference type="KEGG" id="efe:EFER_2474"/>
<dbReference type="HOGENOM" id="CLU_161438_2_1_6"/>
<dbReference type="OrthoDB" id="9793424at2"/>
<dbReference type="Proteomes" id="UP000000745">
    <property type="component" value="Chromosome"/>
</dbReference>
<dbReference type="GO" id="GO:0005829">
    <property type="term" value="C:cytosol"/>
    <property type="evidence" value="ECO:0007669"/>
    <property type="project" value="TreeGrafter"/>
</dbReference>
<dbReference type="FunFam" id="3.30.70.260:FF:000002">
    <property type="entry name" value="UPF0250 protein YbeD"/>
    <property type="match status" value="1"/>
</dbReference>
<dbReference type="Gene3D" id="3.30.70.260">
    <property type="match status" value="1"/>
</dbReference>
<dbReference type="HAMAP" id="MF_00659">
    <property type="entry name" value="UPF0250"/>
    <property type="match status" value="1"/>
</dbReference>
<dbReference type="InterPro" id="IPR007454">
    <property type="entry name" value="UPF0250_YbeD-like"/>
</dbReference>
<dbReference type="InterPro" id="IPR027471">
    <property type="entry name" value="YbeD-like_sf"/>
</dbReference>
<dbReference type="NCBIfam" id="NF003447">
    <property type="entry name" value="PRK04998.1"/>
    <property type="match status" value="1"/>
</dbReference>
<dbReference type="PANTHER" id="PTHR38036">
    <property type="entry name" value="UPF0250 PROTEIN YBED"/>
    <property type="match status" value="1"/>
</dbReference>
<dbReference type="PANTHER" id="PTHR38036:SF1">
    <property type="entry name" value="UPF0250 PROTEIN YBED"/>
    <property type="match status" value="1"/>
</dbReference>
<dbReference type="Pfam" id="PF04359">
    <property type="entry name" value="DUF493"/>
    <property type="match status" value="1"/>
</dbReference>
<dbReference type="SUPFAM" id="SSF117991">
    <property type="entry name" value="YbeD/HP0495-like"/>
    <property type="match status" value="1"/>
</dbReference>
<gene>
    <name evidence="1" type="primary">ybeD</name>
    <name type="ordered locus">EFER_2474</name>
</gene>
<sequence length="87" mass="9827">MKTKLNELLEFPTPFTYKVMGQALPELVDQVVEVVQRHAPGDYTPTVKPSSKGNYHSVSITINATHIEQVETLYEELGKIDIVRMVL</sequence>
<name>YBED_ESCF3</name>
<proteinExistence type="inferred from homology"/>
<feature type="chain" id="PRO_1000131247" description="UPF0250 protein YbeD">
    <location>
        <begin position="1"/>
        <end position="87"/>
    </location>
</feature>
<evidence type="ECO:0000255" key="1">
    <source>
        <dbReference type="HAMAP-Rule" id="MF_00659"/>
    </source>
</evidence>
<comment type="similarity">
    <text evidence="1">Belongs to the UPF0250 family.</text>
</comment>
<accession>B7LLI1</accession>